<name>CMC4_YEAS1</name>
<reference key="1">
    <citation type="submission" date="2005-03" db="EMBL/GenBank/DDBJ databases">
        <title>Annotation of the Saccharomyces cerevisiae RM11-1a genome.</title>
        <authorList>
            <consortium name="The Broad Institute Genome Sequencing Platform"/>
            <person name="Birren B.W."/>
            <person name="Lander E.S."/>
            <person name="Galagan J.E."/>
            <person name="Nusbaum C."/>
            <person name="Devon K."/>
            <person name="Cuomo C."/>
            <person name="Jaffe D.B."/>
            <person name="Butler J."/>
            <person name="Alvarez P."/>
            <person name="Gnerre S."/>
            <person name="Grabherr M."/>
            <person name="Kleber M."/>
            <person name="Mauceli E.W."/>
            <person name="Brockman W."/>
            <person name="MacCallum I.A."/>
            <person name="Rounsley S."/>
            <person name="Young S.K."/>
            <person name="LaButti K."/>
            <person name="Pushparaj V."/>
            <person name="DeCaprio D."/>
            <person name="Crawford M."/>
            <person name="Koehrsen M."/>
            <person name="Engels R."/>
            <person name="Montgomery P."/>
            <person name="Pearson M."/>
            <person name="Howarth C."/>
            <person name="Larson L."/>
            <person name="Luoma S."/>
            <person name="White J."/>
            <person name="O'Leary S."/>
            <person name="Kodira C.D."/>
            <person name="Zeng Q."/>
            <person name="Yandava C."/>
            <person name="Alvarado L."/>
            <person name="Pratt S."/>
            <person name="Kruglyak L."/>
        </authorList>
    </citation>
    <scope>NUCLEOTIDE SEQUENCE [LARGE SCALE GENOMIC DNA]</scope>
    <source>
        <strain>RM11-1a</strain>
    </source>
</reference>
<gene>
    <name type="primary">CMC4</name>
    <name type="ORF">SCRG_02088</name>
</gene>
<keyword id="KW-1015">Disulfide bond</keyword>
<keyword id="KW-0496">Mitochondrion</keyword>
<keyword id="KW-0677">Repeat</keyword>
<dbReference type="EMBL" id="CH408047">
    <property type="protein sequence ID" value="EDV11685.1"/>
    <property type="molecule type" value="Genomic_DNA"/>
</dbReference>
<dbReference type="SMR" id="B3LM82"/>
<dbReference type="HOGENOM" id="CLU_177210_0_0_1"/>
<dbReference type="OrthoDB" id="23752at4893"/>
<dbReference type="Proteomes" id="UP000008335">
    <property type="component" value="Unassembled WGS sequence"/>
</dbReference>
<dbReference type="GO" id="GO:0005758">
    <property type="term" value="C:mitochondrial intermembrane space"/>
    <property type="evidence" value="ECO:0007669"/>
    <property type="project" value="UniProtKB-SubCell"/>
</dbReference>
<dbReference type="FunFam" id="1.10.287.1130:FF:000008">
    <property type="entry name" value="Cx9C motif-containing protein 4, mitochondrial"/>
    <property type="match status" value="1"/>
</dbReference>
<dbReference type="Gene3D" id="1.10.287.1130">
    <property type="entry name" value="CytochromE C oxidase copper chaperone"/>
    <property type="match status" value="1"/>
</dbReference>
<dbReference type="InterPro" id="IPR027179">
    <property type="entry name" value="CMC4"/>
</dbReference>
<dbReference type="InterPro" id="IPR009069">
    <property type="entry name" value="Cys_alpha_HP_mot_SF"/>
</dbReference>
<dbReference type="PANTHER" id="PTHR15590">
    <property type="entry name" value="CX9C MOTIF-CONTAINING PROTEIN 4"/>
    <property type="match status" value="1"/>
</dbReference>
<dbReference type="PANTHER" id="PTHR15590:SF0">
    <property type="entry name" value="CX9C MOTIF-CONTAINING PROTEIN 4"/>
    <property type="match status" value="1"/>
</dbReference>
<dbReference type="Pfam" id="PF08991">
    <property type="entry name" value="CMC4"/>
    <property type="match status" value="1"/>
</dbReference>
<dbReference type="SUPFAM" id="SSF47072">
    <property type="entry name" value="Cysteine alpha-hairpin motif"/>
    <property type="match status" value="1"/>
</dbReference>
<dbReference type="PROSITE" id="PS51808">
    <property type="entry name" value="CHCH"/>
    <property type="match status" value="1"/>
</dbReference>
<accession>B3LM82</accession>
<proteinExistence type="inferred from homology"/>
<protein>
    <recommendedName>
        <fullName>Cx9C motif-containing protein 4, mitochondrial</fullName>
    </recommendedName>
</protein>
<sequence length="73" mass="8217">MSNPCQKEACAIQDCLLSHQYDDAKCAKVIDQLYICCSKFYKDNGKDSRSPCCPLPSLLELKMKQRKLTPGDS</sequence>
<feature type="chain" id="PRO_0000408578" description="Cx9C motif-containing protein 4, mitochondrial">
    <location>
        <begin position="1"/>
        <end position="73"/>
    </location>
</feature>
<feature type="domain" description="CHCH" evidence="2">
    <location>
        <begin position="2"/>
        <end position="44"/>
    </location>
</feature>
<feature type="short sequence motif" description="Cx9C motif 1" evidence="2">
    <location>
        <begin position="5"/>
        <end position="15"/>
    </location>
</feature>
<feature type="short sequence motif" description="Cx9C motif 2" evidence="2">
    <location>
        <begin position="26"/>
        <end position="36"/>
    </location>
</feature>
<feature type="disulfide bond" evidence="2">
    <location>
        <begin position="5"/>
        <end position="36"/>
    </location>
</feature>
<feature type="disulfide bond" evidence="2">
    <location>
        <begin position="15"/>
        <end position="26"/>
    </location>
</feature>
<comment type="subcellular location">
    <subcellularLocation>
        <location evidence="1">Mitochondrion intermembrane space</location>
    </subcellularLocation>
    <text evidence="1">Imported into the mitochondria via the mitochondrial disulfide relay system.</text>
</comment>
<comment type="domain">
    <text evidence="1">The twin Cx9C motifs are involved in the recognition by the mitochondrial disulfide relay system.</text>
</comment>
<comment type="similarity">
    <text evidence="3">Belongs to the CMC4 family.</text>
</comment>
<evidence type="ECO:0000250" key="1"/>
<evidence type="ECO:0000255" key="2">
    <source>
        <dbReference type="PROSITE-ProRule" id="PRU01150"/>
    </source>
</evidence>
<evidence type="ECO:0000305" key="3"/>
<organism>
    <name type="scientific">Saccharomyces cerevisiae (strain RM11-1a)</name>
    <name type="common">Baker's yeast</name>
    <dbReference type="NCBI Taxonomy" id="285006"/>
    <lineage>
        <taxon>Eukaryota</taxon>
        <taxon>Fungi</taxon>
        <taxon>Dikarya</taxon>
        <taxon>Ascomycota</taxon>
        <taxon>Saccharomycotina</taxon>
        <taxon>Saccharomycetes</taxon>
        <taxon>Saccharomycetales</taxon>
        <taxon>Saccharomycetaceae</taxon>
        <taxon>Saccharomyces</taxon>
    </lineage>
</organism>